<sequence>MLRFLEVVSEHIKNLRNHIDLETVGEMIKLIDSARSIFVIGAGRSGYIAKAFAMRLMHLGYTVYVVGETVTPRITDQDVLVAISGSGETTSVVNISKKAKDIGSKLVAVTGKRDSSLAKMADVVMVVKGKMKQERDEILSQLAPLGTMFELTAMIFLDALVAEIMMQKHLTEKDLEARHAVLE</sequence>
<name>Y1796_ARCFU</name>
<organism>
    <name type="scientific">Archaeoglobus fulgidus (strain ATCC 49558 / DSM 4304 / JCM 9628 / NBRC 100126 / VC-16)</name>
    <dbReference type="NCBI Taxonomy" id="224325"/>
    <lineage>
        <taxon>Archaea</taxon>
        <taxon>Methanobacteriati</taxon>
        <taxon>Methanobacteriota</taxon>
        <taxon>Archaeoglobi</taxon>
        <taxon>Archaeoglobales</taxon>
        <taxon>Archaeoglobaceae</taxon>
        <taxon>Archaeoglobus</taxon>
    </lineage>
</organism>
<dbReference type="EMBL" id="AE000782">
    <property type="protein sequence ID" value="AAB89472.1"/>
    <property type="molecule type" value="Genomic_DNA"/>
</dbReference>
<dbReference type="PIR" id="C69474">
    <property type="entry name" value="C69474"/>
</dbReference>
<dbReference type="RefSeq" id="WP_010879292.1">
    <property type="nucleotide sequence ID" value="NC_000917.1"/>
</dbReference>
<dbReference type="PDB" id="1VIM">
    <property type="method" value="X-ray"/>
    <property type="resolution" value="1.36 A"/>
    <property type="chains" value="A/B/C/D=2-183"/>
</dbReference>
<dbReference type="PDBsum" id="1VIM"/>
<dbReference type="SMR" id="O28478"/>
<dbReference type="STRING" id="224325.AF_1796"/>
<dbReference type="PaxDb" id="224325-AF_1796"/>
<dbReference type="EnsemblBacteria" id="AAB89472">
    <property type="protein sequence ID" value="AAB89472"/>
    <property type="gene ID" value="AF_1796"/>
</dbReference>
<dbReference type="GeneID" id="1485019"/>
<dbReference type="KEGG" id="afu:AF_1796"/>
<dbReference type="eggNOG" id="arCOG00068">
    <property type="taxonomic scope" value="Archaea"/>
</dbReference>
<dbReference type="HOGENOM" id="CLU_094236_1_1_2"/>
<dbReference type="OrthoDB" id="350569at2157"/>
<dbReference type="PhylomeDB" id="O28478"/>
<dbReference type="EvolutionaryTrace" id="O28478"/>
<dbReference type="Proteomes" id="UP000002199">
    <property type="component" value="Chromosome"/>
</dbReference>
<dbReference type="GO" id="GO:0097367">
    <property type="term" value="F:carbohydrate derivative binding"/>
    <property type="evidence" value="ECO:0007669"/>
    <property type="project" value="InterPro"/>
</dbReference>
<dbReference type="GO" id="GO:0016853">
    <property type="term" value="F:isomerase activity"/>
    <property type="evidence" value="ECO:0007669"/>
    <property type="project" value="InterPro"/>
</dbReference>
<dbReference type="GO" id="GO:1901135">
    <property type="term" value="P:carbohydrate derivative metabolic process"/>
    <property type="evidence" value="ECO:0007669"/>
    <property type="project" value="InterPro"/>
</dbReference>
<dbReference type="CDD" id="cd05005">
    <property type="entry name" value="SIS_PHI"/>
    <property type="match status" value="1"/>
</dbReference>
<dbReference type="Gene3D" id="3.40.50.10490">
    <property type="entry name" value="Glucose-6-phosphate isomerase like protein, domain 1"/>
    <property type="match status" value="1"/>
</dbReference>
<dbReference type="InterPro" id="IPR017552">
    <property type="entry name" value="PHI/rmpB"/>
</dbReference>
<dbReference type="InterPro" id="IPR001347">
    <property type="entry name" value="SIS_dom"/>
</dbReference>
<dbReference type="InterPro" id="IPR046348">
    <property type="entry name" value="SIS_dom_sf"/>
</dbReference>
<dbReference type="NCBIfam" id="TIGR03127">
    <property type="entry name" value="RuMP_HxlB"/>
    <property type="match status" value="1"/>
</dbReference>
<dbReference type="PANTHER" id="PTHR43443">
    <property type="entry name" value="3-HEXULOSE-6-PHOSPHATE ISOMERASE"/>
    <property type="match status" value="1"/>
</dbReference>
<dbReference type="PANTHER" id="PTHR43443:SF1">
    <property type="entry name" value="3-HEXULOSE-6-PHOSPHATE ISOMERASE"/>
    <property type="match status" value="1"/>
</dbReference>
<dbReference type="Pfam" id="PF01380">
    <property type="entry name" value="SIS"/>
    <property type="match status" value="1"/>
</dbReference>
<dbReference type="SUPFAM" id="SSF53697">
    <property type="entry name" value="SIS domain"/>
    <property type="match status" value="1"/>
</dbReference>
<dbReference type="PROSITE" id="PS51464">
    <property type="entry name" value="SIS"/>
    <property type="match status" value="1"/>
</dbReference>
<comment type="similarity">
    <text evidence="2">Belongs to the SIS family. PHI subfamily.</text>
</comment>
<evidence type="ECO:0000255" key="1">
    <source>
        <dbReference type="PROSITE-ProRule" id="PRU00797"/>
    </source>
</evidence>
<evidence type="ECO:0000305" key="2"/>
<evidence type="ECO:0007829" key="3">
    <source>
        <dbReference type="PDB" id="1VIM"/>
    </source>
</evidence>
<keyword id="KW-0002">3D-structure</keyword>
<keyword id="KW-1185">Reference proteome</keyword>
<accession>O28478</accession>
<gene>
    <name type="ordered locus">AF_1796</name>
</gene>
<proteinExistence type="evidence at protein level"/>
<reference key="1">
    <citation type="journal article" date="1997" name="Nature">
        <title>The complete genome sequence of the hyperthermophilic, sulphate-reducing archaeon Archaeoglobus fulgidus.</title>
        <authorList>
            <person name="Klenk H.-P."/>
            <person name="Clayton R.A."/>
            <person name="Tomb J.-F."/>
            <person name="White O."/>
            <person name="Nelson K.E."/>
            <person name="Ketchum K.A."/>
            <person name="Dodson R.J."/>
            <person name="Gwinn M.L."/>
            <person name="Hickey E.K."/>
            <person name="Peterson J.D."/>
            <person name="Richardson D.L."/>
            <person name="Kerlavage A.R."/>
            <person name="Graham D.E."/>
            <person name="Kyrpides N.C."/>
            <person name="Fleischmann R.D."/>
            <person name="Quackenbush J."/>
            <person name="Lee N.H."/>
            <person name="Sutton G.G."/>
            <person name="Gill S.R."/>
            <person name="Kirkness E.F."/>
            <person name="Dougherty B.A."/>
            <person name="McKenney K."/>
            <person name="Adams M.D."/>
            <person name="Loftus B.J."/>
            <person name="Peterson S.N."/>
            <person name="Reich C.I."/>
            <person name="McNeil L.K."/>
            <person name="Badger J.H."/>
            <person name="Glodek A."/>
            <person name="Zhou L."/>
            <person name="Overbeek R."/>
            <person name="Gocayne J.D."/>
            <person name="Weidman J.F."/>
            <person name="McDonald L.A."/>
            <person name="Utterback T.R."/>
            <person name="Cotton M.D."/>
            <person name="Spriggs T."/>
            <person name="Artiach P."/>
            <person name="Kaine B.P."/>
            <person name="Sykes S.M."/>
            <person name="Sadow P.W."/>
            <person name="D'Andrea K.P."/>
            <person name="Bowman C."/>
            <person name="Fujii C."/>
            <person name="Garland S.A."/>
            <person name="Mason T.M."/>
            <person name="Olsen G.J."/>
            <person name="Fraser C.M."/>
            <person name="Smith H.O."/>
            <person name="Woese C.R."/>
            <person name="Venter J.C."/>
        </authorList>
    </citation>
    <scope>NUCLEOTIDE SEQUENCE [LARGE SCALE GENOMIC DNA]</scope>
    <source>
        <strain>ATCC 49558 / DSM 4304 / JCM 9628 / NBRC 100126 / VC-16</strain>
    </source>
</reference>
<feature type="chain" id="PRO_0000136570" description="Uncharacterized protein AF_1796">
    <location>
        <begin position="1"/>
        <end position="183"/>
    </location>
</feature>
<feature type="domain" description="SIS" evidence="1">
    <location>
        <begin position="27"/>
        <end position="170"/>
    </location>
</feature>
<feature type="helix" evidence="3">
    <location>
        <begin position="2"/>
        <end position="18"/>
    </location>
</feature>
<feature type="helix" evidence="3">
    <location>
        <begin position="21"/>
        <end position="33"/>
    </location>
</feature>
<feature type="strand" evidence="3">
    <location>
        <begin position="37"/>
        <end position="40"/>
    </location>
</feature>
<feature type="helix" evidence="3">
    <location>
        <begin position="43"/>
        <end position="58"/>
    </location>
</feature>
<feature type="strand" evidence="3">
    <location>
        <begin position="63"/>
        <end position="65"/>
    </location>
</feature>
<feature type="strand" evidence="3">
    <location>
        <begin position="79"/>
        <end position="83"/>
    </location>
</feature>
<feature type="strand" evidence="3">
    <location>
        <begin position="85"/>
        <end position="87"/>
    </location>
</feature>
<feature type="helix" evidence="3">
    <location>
        <begin position="90"/>
        <end position="102"/>
    </location>
</feature>
<feature type="strand" evidence="3">
    <location>
        <begin position="105"/>
        <end position="111"/>
    </location>
</feature>
<feature type="helix" evidence="3">
    <location>
        <begin position="116"/>
        <end position="120"/>
    </location>
</feature>
<feature type="strand" evidence="3">
    <location>
        <begin position="122"/>
        <end position="126"/>
    </location>
</feature>
<feature type="helix" evidence="3">
    <location>
        <begin position="136"/>
        <end position="142"/>
    </location>
</feature>
<feature type="helix" evidence="3">
    <location>
        <begin position="144"/>
        <end position="146"/>
    </location>
</feature>
<feature type="helix" evidence="3">
    <location>
        <begin position="147"/>
        <end position="168"/>
    </location>
</feature>
<feature type="helix" evidence="3">
    <location>
        <begin position="172"/>
        <end position="178"/>
    </location>
</feature>
<protein>
    <recommendedName>
        <fullName>Uncharacterized protein AF_1796</fullName>
    </recommendedName>
</protein>